<accession>Q9HL74</accession>
<reference key="1">
    <citation type="journal article" date="2000" name="Nature">
        <title>The genome sequence of the thermoacidophilic scavenger Thermoplasma acidophilum.</title>
        <authorList>
            <person name="Ruepp A."/>
            <person name="Graml W."/>
            <person name="Santos-Martinez M.-L."/>
            <person name="Koretke K.K."/>
            <person name="Volker C."/>
            <person name="Mewes H.-W."/>
            <person name="Frishman D."/>
            <person name="Stocker S."/>
            <person name="Lupas A.N."/>
            <person name="Baumeister W."/>
        </authorList>
    </citation>
    <scope>NUCLEOTIDE SEQUENCE [LARGE SCALE GENOMIC DNA]</scope>
    <source>
        <strain>ATCC 25905 / DSM 1728 / JCM 9062 / NBRC 15155 / AMRC-C165</strain>
    </source>
</reference>
<proteinExistence type="inferred from homology"/>
<sequence length="310" mass="34980">MDRKELLSRPVRDLSITADTRLGDLMDQFSSIGGFTAAKIHEAYEIIKDMFSEDNTTFLSFPADIISTGLRGLINEVVKRKLVDVIITTSGTLDHDIARTYRNYYCGSFSYSDIELRDLGINRLGNVLVPDESYGEIIEEKVMESLEKLYAKKKEWATVDLIHEVGLDINSESSIIYNAAKNNIPVFVPGITDGSFGSQLWSFYEQHHDFKINLLEDEHRLSDIIFDAKKTGAIMIGGGISKHHTIWWNQFRDGLDYAVYVTTAQEYDGSLSGAKLEEAISWKKVRPDARYVNVYGDATVIMPVLLAPFL</sequence>
<name>DHYS_THEAC</name>
<keyword id="KW-0386">Hypusine biosynthesis</keyword>
<keyword id="KW-0520">NAD</keyword>
<keyword id="KW-1185">Reference proteome</keyword>
<keyword id="KW-0808">Transferase</keyword>
<feature type="chain" id="PRO_0000134510" description="Probable deoxyhypusine synthase">
    <location>
        <begin position="1"/>
        <end position="310"/>
    </location>
</feature>
<feature type="active site" description="Nucleophile" evidence="1">
    <location>
        <position position="284"/>
    </location>
</feature>
<gene>
    <name type="primary">dys</name>
    <name type="ordered locus">Ta0356</name>
</gene>
<organism>
    <name type="scientific">Thermoplasma acidophilum (strain ATCC 25905 / DSM 1728 / JCM 9062 / NBRC 15155 / AMRC-C165)</name>
    <dbReference type="NCBI Taxonomy" id="273075"/>
    <lineage>
        <taxon>Archaea</taxon>
        <taxon>Methanobacteriati</taxon>
        <taxon>Thermoplasmatota</taxon>
        <taxon>Thermoplasmata</taxon>
        <taxon>Thermoplasmatales</taxon>
        <taxon>Thermoplasmataceae</taxon>
        <taxon>Thermoplasma</taxon>
    </lineage>
</organism>
<protein>
    <recommendedName>
        <fullName>Probable deoxyhypusine synthase</fullName>
        <shortName>DHS</shortName>
        <ecNumber>2.5.1.46</ecNumber>
    </recommendedName>
</protein>
<evidence type="ECO:0000250" key="1"/>
<evidence type="ECO:0000305" key="2"/>
<dbReference type="EC" id="2.5.1.46"/>
<dbReference type="EMBL" id="AL445064">
    <property type="protein sequence ID" value="CAC11500.1"/>
    <property type="status" value="ALT_INIT"/>
    <property type="molecule type" value="Genomic_DNA"/>
</dbReference>
<dbReference type="RefSeq" id="WP_048161540.1">
    <property type="nucleotide sequence ID" value="NC_002578.1"/>
</dbReference>
<dbReference type="SMR" id="Q9HL74"/>
<dbReference type="FunCoup" id="Q9HL74">
    <property type="interactions" value="152"/>
</dbReference>
<dbReference type="STRING" id="273075.gene:9571574"/>
<dbReference type="PaxDb" id="273075-Ta0356"/>
<dbReference type="EnsemblBacteria" id="CAC11500">
    <property type="protein sequence ID" value="CAC11500"/>
    <property type="gene ID" value="CAC11500"/>
</dbReference>
<dbReference type="KEGG" id="tac:Ta0356"/>
<dbReference type="eggNOG" id="arCOG04142">
    <property type="taxonomic scope" value="Archaea"/>
</dbReference>
<dbReference type="HOGENOM" id="CLU_039781_1_0_2"/>
<dbReference type="InParanoid" id="Q9HL74"/>
<dbReference type="OrthoDB" id="17730at2157"/>
<dbReference type="UniPathway" id="UPA00354"/>
<dbReference type="Proteomes" id="UP000001024">
    <property type="component" value="Chromosome"/>
</dbReference>
<dbReference type="GO" id="GO:0005737">
    <property type="term" value="C:cytoplasm"/>
    <property type="evidence" value="ECO:0007669"/>
    <property type="project" value="TreeGrafter"/>
</dbReference>
<dbReference type="GO" id="GO:0034038">
    <property type="term" value="F:deoxyhypusine synthase activity"/>
    <property type="evidence" value="ECO:0007669"/>
    <property type="project" value="UniProtKB-UniRule"/>
</dbReference>
<dbReference type="FunFam" id="3.40.910.10:FF:000010">
    <property type="entry name" value="Deoxyhypusine synthase"/>
    <property type="match status" value="1"/>
</dbReference>
<dbReference type="Gene3D" id="3.40.910.10">
    <property type="entry name" value="Deoxyhypusine synthase"/>
    <property type="match status" value="1"/>
</dbReference>
<dbReference type="HAMAP" id="MF_00153">
    <property type="entry name" value="DHS"/>
    <property type="match status" value="1"/>
</dbReference>
<dbReference type="InterPro" id="IPR022899">
    <property type="entry name" value="Deoxyhypus_synthase_arc"/>
</dbReference>
<dbReference type="InterPro" id="IPR002773">
    <property type="entry name" value="Deoxyhypusine_synthase"/>
</dbReference>
<dbReference type="InterPro" id="IPR036982">
    <property type="entry name" value="Deoxyhypusine_synthase_sf"/>
</dbReference>
<dbReference type="InterPro" id="IPR029035">
    <property type="entry name" value="DHS-like_NAD/FAD-binding_dom"/>
</dbReference>
<dbReference type="NCBIfam" id="NF002294">
    <property type="entry name" value="PRK01221.1"/>
    <property type="match status" value="1"/>
</dbReference>
<dbReference type="PANTHER" id="PTHR11703">
    <property type="entry name" value="DEOXYHYPUSINE SYNTHASE"/>
    <property type="match status" value="1"/>
</dbReference>
<dbReference type="PANTHER" id="PTHR11703:SF0">
    <property type="entry name" value="DEOXYHYPUSINE SYNTHASE"/>
    <property type="match status" value="1"/>
</dbReference>
<dbReference type="Pfam" id="PF01916">
    <property type="entry name" value="DS"/>
    <property type="match status" value="1"/>
</dbReference>
<dbReference type="SUPFAM" id="SSF52467">
    <property type="entry name" value="DHS-like NAD/FAD-binding domain"/>
    <property type="match status" value="1"/>
</dbReference>
<comment type="function">
    <text evidence="1">Catalyzes the NAD-dependent oxidative cleavage of spermidine and the subsequent transfer of the butylamine moiety of spermidine to the epsilon-amino group of a specific lysine residue of the eIF-5A precursor protein to form the intermediate deoxyhypusine residue.</text>
</comment>
<comment type="catalytic activity">
    <reaction>
        <text>[eIF5A protein]-L-lysine + spermidine = [eIF5A protein]-deoxyhypusine + propane-1,3-diamine</text>
        <dbReference type="Rhea" id="RHEA:33299"/>
        <dbReference type="Rhea" id="RHEA-COMP:10143"/>
        <dbReference type="Rhea" id="RHEA-COMP:10144"/>
        <dbReference type="ChEBI" id="CHEBI:29969"/>
        <dbReference type="ChEBI" id="CHEBI:57484"/>
        <dbReference type="ChEBI" id="CHEBI:57834"/>
        <dbReference type="ChEBI" id="CHEBI:82657"/>
        <dbReference type="EC" id="2.5.1.46"/>
    </reaction>
</comment>
<comment type="cofactor">
    <cofactor evidence="1">
        <name>NAD(+)</name>
        <dbReference type="ChEBI" id="CHEBI:57540"/>
    </cofactor>
</comment>
<comment type="pathway">
    <text>Protein modification; eIF5A hypusination.</text>
</comment>
<comment type="similarity">
    <text evidence="2">Belongs to the deoxyhypusine synthase family.</text>
</comment>
<comment type="sequence caution" evidence="2">
    <conflict type="erroneous initiation">
        <sequence resource="EMBL-CDS" id="CAC11500"/>
    </conflict>
</comment>